<name>G6PI_HELPY</name>
<dbReference type="EC" id="5.3.1.9" evidence="1"/>
<dbReference type="EMBL" id="AE000511">
    <property type="protein sequence ID" value="AAD08211.1"/>
    <property type="molecule type" value="Genomic_DNA"/>
</dbReference>
<dbReference type="PIR" id="F64665">
    <property type="entry name" value="F64665"/>
</dbReference>
<dbReference type="RefSeq" id="NP_207957.1">
    <property type="nucleotide sequence ID" value="NC_000915.1"/>
</dbReference>
<dbReference type="RefSeq" id="WP_000957646.1">
    <property type="nucleotide sequence ID" value="NC_018939.1"/>
</dbReference>
<dbReference type="SMR" id="O25781"/>
<dbReference type="FunCoup" id="O25781">
    <property type="interactions" value="331"/>
</dbReference>
<dbReference type="STRING" id="85962.HP_1166"/>
<dbReference type="PaxDb" id="85962-C694_06020"/>
<dbReference type="EnsemblBacteria" id="AAD08211">
    <property type="protein sequence ID" value="AAD08211"/>
    <property type="gene ID" value="HP_1166"/>
</dbReference>
<dbReference type="KEGG" id="heo:C694_06020"/>
<dbReference type="KEGG" id="hpy:HP_1166"/>
<dbReference type="PATRIC" id="fig|85962.47.peg.1250"/>
<dbReference type="eggNOG" id="COG0166">
    <property type="taxonomic scope" value="Bacteria"/>
</dbReference>
<dbReference type="InParanoid" id="O25781"/>
<dbReference type="OrthoDB" id="140919at2"/>
<dbReference type="PhylomeDB" id="O25781"/>
<dbReference type="UniPathway" id="UPA00109">
    <property type="reaction ID" value="UER00181"/>
</dbReference>
<dbReference type="UniPathway" id="UPA00138"/>
<dbReference type="Proteomes" id="UP000000429">
    <property type="component" value="Chromosome"/>
</dbReference>
<dbReference type="GO" id="GO:0005829">
    <property type="term" value="C:cytosol"/>
    <property type="evidence" value="ECO:0000318"/>
    <property type="project" value="GO_Central"/>
</dbReference>
<dbReference type="GO" id="GO:0097367">
    <property type="term" value="F:carbohydrate derivative binding"/>
    <property type="evidence" value="ECO:0007669"/>
    <property type="project" value="InterPro"/>
</dbReference>
<dbReference type="GO" id="GO:0004347">
    <property type="term" value="F:glucose-6-phosphate isomerase activity"/>
    <property type="evidence" value="ECO:0000318"/>
    <property type="project" value="GO_Central"/>
</dbReference>
<dbReference type="GO" id="GO:0048029">
    <property type="term" value="F:monosaccharide binding"/>
    <property type="evidence" value="ECO:0000318"/>
    <property type="project" value="GO_Central"/>
</dbReference>
<dbReference type="GO" id="GO:0006094">
    <property type="term" value="P:gluconeogenesis"/>
    <property type="evidence" value="ECO:0000318"/>
    <property type="project" value="GO_Central"/>
</dbReference>
<dbReference type="GO" id="GO:0051156">
    <property type="term" value="P:glucose 6-phosphate metabolic process"/>
    <property type="evidence" value="ECO:0000318"/>
    <property type="project" value="GO_Central"/>
</dbReference>
<dbReference type="GO" id="GO:0006096">
    <property type="term" value="P:glycolytic process"/>
    <property type="evidence" value="ECO:0000318"/>
    <property type="project" value="GO_Central"/>
</dbReference>
<dbReference type="CDD" id="cd05015">
    <property type="entry name" value="SIS_PGI_1"/>
    <property type="match status" value="1"/>
</dbReference>
<dbReference type="CDD" id="cd05016">
    <property type="entry name" value="SIS_PGI_2"/>
    <property type="match status" value="1"/>
</dbReference>
<dbReference type="FunFam" id="1.10.1390.10:FF:000001">
    <property type="entry name" value="Glucose-6-phosphate isomerase"/>
    <property type="match status" value="1"/>
</dbReference>
<dbReference type="FunFam" id="3.40.50.10490:FF:000018">
    <property type="entry name" value="Glucose-6-phosphate isomerase"/>
    <property type="match status" value="1"/>
</dbReference>
<dbReference type="Gene3D" id="1.10.1390.10">
    <property type="match status" value="1"/>
</dbReference>
<dbReference type="Gene3D" id="3.40.50.10490">
    <property type="entry name" value="Glucose-6-phosphate isomerase like protein, domain 1"/>
    <property type="match status" value="2"/>
</dbReference>
<dbReference type="HAMAP" id="MF_00473">
    <property type="entry name" value="G6P_isomerase"/>
    <property type="match status" value="1"/>
</dbReference>
<dbReference type="InterPro" id="IPR001672">
    <property type="entry name" value="G6P_Isomerase"/>
</dbReference>
<dbReference type="InterPro" id="IPR023096">
    <property type="entry name" value="G6P_Isomerase_C"/>
</dbReference>
<dbReference type="InterPro" id="IPR018189">
    <property type="entry name" value="Phosphoglucose_isomerase_CS"/>
</dbReference>
<dbReference type="InterPro" id="IPR046348">
    <property type="entry name" value="SIS_dom_sf"/>
</dbReference>
<dbReference type="InterPro" id="IPR035476">
    <property type="entry name" value="SIS_PGI_1"/>
</dbReference>
<dbReference type="InterPro" id="IPR035482">
    <property type="entry name" value="SIS_PGI_2"/>
</dbReference>
<dbReference type="NCBIfam" id="NF001211">
    <property type="entry name" value="PRK00179.1"/>
    <property type="match status" value="1"/>
</dbReference>
<dbReference type="PANTHER" id="PTHR11469">
    <property type="entry name" value="GLUCOSE-6-PHOSPHATE ISOMERASE"/>
    <property type="match status" value="1"/>
</dbReference>
<dbReference type="PANTHER" id="PTHR11469:SF1">
    <property type="entry name" value="GLUCOSE-6-PHOSPHATE ISOMERASE"/>
    <property type="match status" value="1"/>
</dbReference>
<dbReference type="Pfam" id="PF00342">
    <property type="entry name" value="PGI"/>
    <property type="match status" value="1"/>
</dbReference>
<dbReference type="PRINTS" id="PR00662">
    <property type="entry name" value="G6PISOMERASE"/>
</dbReference>
<dbReference type="SUPFAM" id="SSF53697">
    <property type="entry name" value="SIS domain"/>
    <property type="match status" value="1"/>
</dbReference>
<dbReference type="PROSITE" id="PS00765">
    <property type="entry name" value="P_GLUCOSE_ISOMERASE_1"/>
    <property type="match status" value="1"/>
</dbReference>
<dbReference type="PROSITE" id="PS00174">
    <property type="entry name" value="P_GLUCOSE_ISOMERASE_2"/>
    <property type="match status" value="1"/>
</dbReference>
<dbReference type="PROSITE" id="PS51463">
    <property type="entry name" value="P_GLUCOSE_ISOMERASE_3"/>
    <property type="match status" value="1"/>
</dbReference>
<sequence length="545" mass="62487">MLTQLKTYPKLLKHYEEIKEVHMRDWFFKDKERASRYFLQFESLSLDYSKNRLNDTTLKLLFELANDCSLKEKIEAMFKGEKINTTEKRAVLHTALRSLNDTEILLDNMEVLKSIRSVLKRMRAFSDSVRSGKRLGYTNQVITDIVNIGIGGSDLGALMVCTALKRYAHPRLKMHFVSNVDGTQILDVLEKLNPASTLFIVASKTFSTQETLTNALTARKWFVERSGDEKHIAKHFVAVSTNKEAVQQFGIDEHNMFEFWDFVGGRYSLWSAIGLSIMIYLGKKNFNALLKGAYLMDEHFRNAPFESNLPVLMGLIGVWYINFFQSKSHLIAPYDQYLRHFPKFIQQLDMESNGKRISKKGEIIPYDTCPVVWGDMGINAQHAFFQLLHQGTHLIPIDFIASLDKKPNAKGHHEILFSNVLAQAQAFMKGKSYEEALGELLFKGLDKDEAKDLAHHRVFFGNRPSNILLLEKISPSNIGALVALYEHKVFVQGVIWDINSFDQWGVELGKELAVPILQELEGHKSNAYFDSSTKHLIELYKNYNQ</sequence>
<reference key="1">
    <citation type="journal article" date="1997" name="Nature">
        <title>The complete genome sequence of the gastric pathogen Helicobacter pylori.</title>
        <authorList>
            <person name="Tomb J.-F."/>
            <person name="White O."/>
            <person name="Kerlavage A.R."/>
            <person name="Clayton R.A."/>
            <person name="Sutton G.G."/>
            <person name="Fleischmann R.D."/>
            <person name="Ketchum K.A."/>
            <person name="Klenk H.-P."/>
            <person name="Gill S.R."/>
            <person name="Dougherty B.A."/>
            <person name="Nelson K.E."/>
            <person name="Quackenbush J."/>
            <person name="Zhou L."/>
            <person name="Kirkness E.F."/>
            <person name="Peterson S.N."/>
            <person name="Loftus B.J."/>
            <person name="Richardson D.L."/>
            <person name="Dodson R.J."/>
            <person name="Khalak H.G."/>
            <person name="Glodek A."/>
            <person name="McKenney K."/>
            <person name="FitzGerald L.M."/>
            <person name="Lee N."/>
            <person name="Adams M.D."/>
            <person name="Hickey E.K."/>
            <person name="Berg D.E."/>
            <person name="Gocayne J.D."/>
            <person name="Utterback T.R."/>
            <person name="Peterson J.D."/>
            <person name="Kelley J.M."/>
            <person name="Cotton M.D."/>
            <person name="Weidman J.F."/>
            <person name="Fujii C."/>
            <person name="Bowman C."/>
            <person name="Watthey L."/>
            <person name="Wallin E."/>
            <person name="Hayes W.S."/>
            <person name="Borodovsky M."/>
            <person name="Karp P.D."/>
            <person name="Smith H.O."/>
            <person name="Fraser C.M."/>
            <person name="Venter J.C."/>
        </authorList>
    </citation>
    <scope>NUCLEOTIDE SEQUENCE [LARGE SCALE GENOMIC DNA]</scope>
    <source>
        <strain>ATCC 700392 / 26695</strain>
    </source>
</reference>
<proteinExistence type="inferred from homology"/>
<comment type="function">
    <text evidence="1">Catalyzes the reversible isomerization of glucose-6-phosphate to fructose-6-phosphate.</text>
</comment>
<comment type="catalytic activity">
    <reaction evidence="1">
        <text>alpha-D-glucose 6-phosphate = beta-D-fructose 6-phosphate</text>
        <dbReference type="Rhea" id="RHEA:11816"/>
        <dbReference type="ChEBI" id="CHEBI:57634"/>
        <dbReference type="ChEBI" id="CHEBI:58225"/>
        <dbReference type="EC" id="5.3.1.9"/>
    </reaction>
</comment>
<comment type="pathway">
    <text evidence="1">Carbohydrate biosynthesis; gluconeogenesis.</text>
</comment>
<comment type="pathway">
    <text evidence="1">Carbohydrate degradation; glycolysis; D-glyceraldehyde 3-phosphate and glycerone phosphate from D-glucose: step 2/4.</text>
</comment>
<comment type="subcellular location">
    <subcellularLocation>
        <location evidence="1">Cytoplasm</location>
    </subcellularLocation>
</comment>
<comment type="similarity">
    <text evidence="1 2">Belongs to the GPI family.</text>
</comment>
<protein>
    <recommendedName>
        <fullName evidence="1">Glucose-6-phosphate isomerase</fullName>
        <shortName evidence="1">GPI</shortName>
        <ecNumber evidence="1">5.3.1.9</ecNumber>
    </recommendedName>
    <alternativeName>
        <fullName evidence="1">Phosphoglucose isomerase</fullName>
        <shortName evidence="1">PGI</shortName>
    </alternativeName>
    <alternativeName>
        <fullName evidence="1">Phosphohexose isomerase</fullName>
        <shortName evidence="1">PHI</shortName>
    </alternativeName>
</protein>
<evidence type="ECO:0000255" key="1">
    <source>
        <dbReference type="HAMAP-Rule" id="MF_00473"/>
    </source>
</evidence>
<evidence type="ECO:0000305" key="2"/>
<keyword id="KW-0963">Cytoplasm</keyword>
<keyword id="KW-0312">Gluconeogenesis</keyword>
<keyword id="KW-0324">Glycolysis</keyword>
<keyword id="KW-0413">Isomerase</keyword>
<keyword id="KW-1185">Reference proteome</keyword>
<organism>
    <name type="scientific">Helicobacter pylori (strain ATCC 700392 / 26695)</name>
    <name type="common">Campylobacter pylori</name>
    <dbReference type="NCBI Taxonomy" id="85962"/>
    <lineage>
        <taxon>Bacteria</taxon>
        <taxon>Pseudomonadati</taxon>
        <taxon>Campylobacterota</taxon>
        <taxon>Epsilonproteobacteria</taxon>
        <taxon>Campylobacterales</taxon>
        <taxon>Helicobacteraceae</taxon>
        <taxon>Helicobacter</taxon>
    </lineage>
</organism>
<feature type="chain" id="PRO_0000180652" description="Glucose-6-phosphate isomerase">
    <location>
        <begin position="1"/>
        <end position="545"/>
    </location>
</feature>
<feature type="active site" description="Proton donor" evidence="1">
    <location>
        <position position="351"/>
    </location>
</feature>
<feature type="active site" evidence="1">
    <location>
        <position position="382"/>
    </location>
</feature>
<feature type="active site" evidence="1">
    <location>
        <position position="510"/>
    </location>
</feature>
<accession>O25781</accession>
<gene>
    <name evidence="1" type="primary">pgi</name>
    <name type="ordered locus">HP_1166</name>
</gene>